<reference key="1">
    <citation type="journal article" date="2015" name="Proc. Natl. Acad. Sci. U.S.A.">
        <title>Trichodesmium genome maintains abundant, widespread noncoding DNA in situ, despite oligotrophic lifestyle.</title>
        <authorList>
            <person name="Walworth N."/>
            <person name="Pfreundt U."/>
            <person name="Nelson W.C."/>
            <person name="Mincer T."/>
            <person name="Heidelberg J.F."/>
            <person name="Fu F."/>
            <person name="Waterbury J.B."/>
            <person name="Glavina del Rio T."/>
            <person name="Goodwin L."/>
            <person name="Kyrpides N.C."/>
            <person name="Land M.L."/>
            <person name="Woyke T."/>
            <person name="Hutchins D.A."/>
            <person name="Hess W.R."/>
            <person name="Webb E.A."/>
        </authorList>
    </citation>
    <scope>NUCLEOTIDE SEQUENCE [LARGE SCALE GENOMIC DNA]</scope>
    <source>
        <strain>IMS101</strain>
    </source>
</reference>
<feature type="chain" id="PRO_0000268553" description="Bifunctional protein FolD">
    <location>
        <begin position="1"/>
        <end position="287"/>
    </location>
</feature>
<feature type="binding site" evidence="1">
    <location>
        <begin position="165"/>
        <end position="167"/>
    </location>
    <ligand>
        <name>NADP(+)</name>
        <dbReference type="ChEBI" id="CHEBI:58349"/>
    </ligand>
</feature>
<feature type="binding site" evidence="1">
    <location>
        <position position="190"/>
    </location>
    <ligand>
        <name>NADP(+)</name>
        <dbReference type="ChEBI" id="CHEBI:58349"/>
    </ligand>
</feature>
<feature type="binding site" evidence="1">
    <location>
        <position position="231"/>
    </location>
    <ligand>
        <name>NADP(+)</name>
        <dbReference type="ChEBI" id="CHEBI:58349"/>
    </ligand>
</feature>
<name>FOLD_TRIEI</name>
<comment type="function">
    <text evidence="1">Catalyzes the oxidation of 5,10-methylenetetrahydrofolate to 5,10-methenyltetrahydrofolate and then the hydrolysis of 5,10-methenyltetrahydrofolate to 10-formyltetrahydrofolate.</text>
</comment>
<comment type="catalytic activity">
    <reaction evidence="1">
        <text>(6R)-5,10-methylene-5,6,7,8-tetrahydrofolate + NADP(+) = (6R)-5,10-methenyltetrahydrofolate + NADPH</text>
        <dbReference type="Rhea" id="RHEA:22812"/>
        <dbReference type="ChEBI" id="CHEBI:15636"/>
        <dbReference type="ChEBI" id="CHEBI:57455"/>
        <dbReference type="ChEBI" id="CHEBI:57783"/>
        <dbReference type="ChEBI" id="CHEBI:58349"/>
        <dbReference type="EC" id="1.5.1.5"/>
    </reaction>
</comment>
<comment type="catalytic activity">
    <reaction evidence="1">
        <text>(6R)-5,10-methenyltetrahydrofolate + H2O = (6R)-10-formyltetrahydrofolate + H(+)</text>
        <dbReference type="Rhea" id="RHEA:23700"/>
        <dbReference type="ChEBI" id="CHEBI:15377"/>
        <dbReference type="ChEBI" id="CHEBI:15378"/>
        <dbReference type="ChEBI" id="CHEBI:57455"/>
        <dbReference type="ChEBI" id="CHEBI:195366"/>
        <dbReference type="EC" id="3.5.4.9"/>
    </reaction>
</comment>
<comment type="pathway">
    <text evidence="1">One-carbon metabolism; tetrahydrofolate interconversion.</text>
</comment>
<comment type="subunit">
    <text evidence="1">Homodimer.</text>
</comment>
<comment type="similarity">
    <text evidence="1">Belongs to the tetrahydrofolate dehydrogenase/cyclohydrolase family.</text>
</comment>
<keyword id="KW-0028">Amino-acid biosynthesis</keyword>
<keyword id="KW-0368">Histidine biosynthesis</keyword>
<keyword id="KW-0378">Hydrolase</keyword>
<keyword id="KW-0486">Methionine biosynthesis</keyword>
<keyword id="KW-0511">Multifunctional enzyme</keyword>
<keyword id="KW-0521">NADP</keyword>
<keyword id="KW-0554">One-carbon metabolism</keyword>
<keyword id="KW-0560">Oxidoreductase</keyword>
<keyword id="KW-0658">Purine biosynthesis</keyword>
<dbReference type="EC" id="1.5.1.5" evidence="1"/>
<dbReference type="EC" id="3.5.4.9" evidence="1"/>
<dbReference type="EMBL" id="CP000393">
    <property type="protein sequence ID" value="ABG53178.1"/>
    <property type="molecule type" value="Genomic_DNA"/>
</dbReference>
<dbReference type="RefSeq" id="WP_011613508.1">
    <property type="nucleotide sequence ID" value="NC_008312.1"/>
</dbReference>
<dbReference type="SMR" id="Q10X46"/>
<dbReference type="STRING" id="203124.Tery_4172"/>
<dbReference type="KEGG" id="ter:Tery_4172"/>
<dbReference type="eggNOG" id="COG0190">
    <property type="taxonomic scope" value="Bacteria"/>
</dbReference>
<dbReference type="HOGENOM" id="CLU_034045_2_1_3"/>
<dbReference type="OrthoDB" id="9803580at2"/>
<dbReference type="UniPathway" id="UPA00193"/>
<dbReference type="GO" id="GO:0005829">
    <property type="term" value="C:cytosol"/>
    <property type="evidence" value="ECO:0007669"/>
    <property type="project" value="TreeGrafter"/>
</dbReference>
<dbReference type="GO" id="GO:0004477">
    <property type="term" value="F:methenyltetrahydrofolate cyclohydrolase activity"/>
    <property type="evidence" value="ECO:0007669"/>
    <property type="project" value="UniProtKB-UniRule"/>
</dbReference>
<dbReference type="GO" id="GO:0004488">
    <property type="term" value="F:methylenetetrahydrofolate dehydrogenase (NADP+) activity"/>
    <property type="evidence" value="ECO:0007669"/>
    <property type="project" value="UniProtKB-UniRule"/>
</dbReference>
<dbReference type="GO" id="GO:0000105">
    <property type="term" value="P:L-histidine biosynthetic process"/>
    <property type="evidence" value="ECO:0007669"/>
    <property type="project" value="UniProtKB-KW"/>
</dbReference>
<dbReference type="GO" id="GO:0009086">
    <property type="term" value="P:methionine biosynthetic process"/>
    <property type="evidence" value="ECO:0007669"/>
    <property type="project" value="UniProtKB-KW"/>
</dbReference>
<dbReference type="GO" id="GO:0006164">
    <property type="term" value="P:purine nucleotide biosynthetic process"/>
    <property type="evidence" value="ECO:0007669"/>
    <property type="project" value="UniProtKB-KW"/>
</dbReference>
<dbReference type="GO" id="GO:0035999">
    <property type="term" value="P:tetrahydrofolate interconversion"/>
    <property type="evidence" value="ECO:0007669"/>
    <property type="project" value="UniProtKB-UniRule"/>
</dbReference>
<dbReference type="CDD" id="cd01080">
    <property type="entry name" value="NAD_bind_m-THF_DH_Cyclohyd"/>
    <property type="match status" value="1"/>
</dbReference>
<dbReference type="FunFam" id="3.40.50.10860:FF:000001">
    <property type="entry name" value="Bifunctional protein FolD"/>
    <property type="match status" value="1"/>
</dbReference>
<dbReference type="FunFam" id="3.40.50.720:FF:000006">
    <property type="entry name" value="Bifunctional protein FolD"/>
    <property type="match status" value="1"/>
</dbReference>
<dbReference type="Gene3D" id="3.40.50.10860">
    <property type="entry name" value="Leucine Dehydrogenase, chain A, domain 1"/>
    <property type="match status" value="1"/>
</dbReference>
<dbReference type="Gene3D" id="3.40.50.720">
    <property type="entry name" value="NAD(P)-binding Rossmann-like Domain"/>
    <property type="match status" value="1"/>
</dbReference>
<dbReference type="HAMAP" id="MF_01576">
    <property type="entry name" value="THF_DHG_CYH"/>
    <property type="match status" value="1"/>
</dbReference>
<dbReference type="InterPro" id="IPR046346">
    <property type="entry name" value="Aminoacid_DH-like_N_sf"/>
</dbReference>
<dbReference type="InterPro" id="IPR036291">
    <property type="entry name" value="NAD(P)-bd_dom_sf"/>
</dbReference>
<dbReference type="InterPro" id="IPR000672">
    <property type="entry name" value="THF_DH/CycHdrlase"/>
</dbReference>
<dbReference type="InterPro" id="IPR020630">
    <property type="entry name" value="THF_DH/CycHdrlase_cat_dom"/>
</dbReference>
<dbReference type="InterPro" id="IPR020867">
    <property type="entry name" value="THF_DH/CycHdrlase_CS"/>
</dbReference>
<dbReference type="InterPro" id="IPR020631">
    <property type="entry name" value="THF_DH/CycHdrlase_NAD-bd_dom"/>
</dbReference>
<dbReference type="NCBIfam" id="NF008058">
    <property type="entry name" value="PRK10792.1"/>
    <property type="match status" value="1"/>
</dbReference>
<dbReference type="NCBIfam" id="NF010783">
    <property type="entry name" value="PRK14186.1"/>
    <property type="match status" value="1"/>
</dbReference>
<dbReference type="PANTHER" id="PTHR48099:SF5">
    <property type="entry name" value="C-1-TETRAHYDROFOLATE SYNTHASE, CYTOPLASMIC"/>
    <property type="match status" value="1"/>
</dbReference>
<dbReference type="PANTHER" id="PTHR48099">
    <property type="entry name" value="C-1-TETRAHYDROFOLATE SYNTHASE, CYTOPLASMIC-RELATED"/>
    <property type="match status" value="1"/>
</dbReference>
<dbReference type="Pfam" id="PF00763">
    <property type="entry name" value="THF_DHG_CYH"/>
    <property type="match status" value="1"/>
</dbReference>
<dbReference type="Pfam" id="PF02882">
    <property type="entry name" value="THF_DHG_CYH_C"/>
    <property type="match status" value="1"/>
</dbReference>
<dbReference type="PRINTS" id="PR00085">
    <property type="entry name" value="THFDHDRGNASE"/>
</dbReference>
<dbReference type="SUPFAM" id="SSF53223">
    <property type="entry name" value="Aminoacid dehydrogenase-like, N-terminal domain"/>
    <property type="match status" value="1"/>
</dbReference>
<dbReference type="SUPFAM" id="SSF51735">
    <property type="entry name" value="NAD(P)-binding Rossmann-fold domains"/>
    <property type="match status" value="1"/>
</dbReference>
<dbReference type="PROSITE" id="PS00767">
    <property type="entry name" value="THF_DHG_CYH_2"/>
    <property type="match status" value="1"/>
</dbReference>
<proteinExistence type="inferred from homology"/>
<protein>
    <recommendedName>
        <fullName evidence="1">Bifunctional protein FolD</fullName>
    </recommendedName>
    <domain>
        <recommendedName>
            <fullName evidence="1">Methylenetetrahydrofolate dehydrogenase</fullName>
            <ecNumber evidence="1">1.5.1.5</ecNumber>
        </recommendedName>
    </domain>
    <domain>
        <recommendedName>
            <fullName evidence="1">Methenyltetrahydrofolate cyclohydrolase</fullName>
            <ecNumber evidence="1">3.5.4.9</ecNumber>
        </recommendedName>
    </domain>
</protein>
<sequence>MTNKLDGKALAKKIKAELQQKVQSLQIKIGRPPGLAVLMVGDNPASGVYVRNKEKACTQVGITSLGKHFPTQTSQAQLGQVIQKLNQDPQVDGILVQLPLPKHLDSTSLLYQIDPSKDVDGLHPMNLGQLLRGEKGLRSCTPAGVMRLLQEYKIELQGKHAVILGRSILVGKPMALMLLEANSTVTIAHSRSKNLEAITKKADILITAVGRPKMISAEMVKPGAVVIDVGINRVIDEAGNSQLVGDVQFNSVAQVAEYITPVPGGIGPMTVAMLLQNTVERWSTLVE</sequence>
<gene>
    <name evidence="1" type="primary">folD</name>
    <name type="ordered locus">Tery_4172</name>
</gene>
<evidence type="ECO:0000255" key="1">
    <source>
        <dbReference type="HAMAP-Rule" id="MF_01576"/>
    </source>
</evidence>
<organism>
    <name type="scientific">Trichodesmium erythraeum (strain IMS101)</name>
    <dbReference type="NCBI Taxonomy" id="203124"/>
    <lineage>
        <taxon>Bacteria</taxon>
        <taxon>Bacillati</taxon>
        <taxon>Cyanobacteriota</taxon>
        <taxon>Cyanophyceae</taxon>
        <taxon>Oscillatoriophycideae</taxon>
        <taxon>Oscillatoriales</taxon>
        <taxon>Microcoleaceae</taxon>
        <taxon>Trichodesmium</taxon>
    </lineage>
</organism>
<accession>Q10X46</accession>